<dbReference type="EMBL" id="U00096">
    <property type="protein sequence ID" value="AAC74894.1"/>
    <property type="molecule type" value="Genomic_DNA"/>
</dbReference>
<dbReference type="EMBL" id="AP009048">
    <property type="protein sequence ID" value="BAE76537.1"/>
    <property type="molecule type" value="Genomic_DNA"/>
</dbReference>
<dbReference type="PIR" id="H64943">
    <property type="entry name" value="H64943"/>
</dbReference>
<dbReference type="RefSeq" id="NP_416338.1">
    <property type="nucleotide sequence ID" value="NC_000913.3"/>
</dbReference>
<dbReference type="RefSeq" id="WP_001295496.1">
    <property type="nucleotide sequence ID" value="NZ_STEB01000009.1"/>
</dbReference>
<dbReference type="BioGRID" id="4259147">
    <property type="interactions" value="8"/>
</dbReference>
<dbReference type="FunCoup" id="P64508">
    <property type="interactions" value="4"/>
</dbReference>
<dbReference type="STRING" id="511145.b1824"/>
<dbReference type="PaxDb" id="511145-b1824"/>
<dbReference type="EnsemblBacteria" id="AAC74894">
    <property type="protein sequence ID" value="AAC74894"/>
    <property type="gene ID" value="b1824"/>
</dbReference>
<dbReference type="GeneID" id="946338"/>
<dbReference type="KEGG" id="ecj:JW1813"/>
<dbReference type="KEGG" id="eco:b1824"/>
<dbReference type="KEGG" id="ecoc:C3026_10390"/>
<dbReference type="PATRIC" id="fig|511145.12.peg.1901"/>
<dbReference type="EchoBASE" id="EB4125"/>
<dbReference type="eggNOG" id="ENOG50331TG">
    <property type="taxonomic scope" value="Bacteria"/>
</dbReference>
<dbReference type="HOGENOM" id="CLU_216752_0_0_6"/>
<dbReference type="InParanoid" id="P64508"/>
<dbReference type="OrthoDB" id="6555804at2"/>
<dbReference type="PhylomeDB" id="P64508"/>
<dbReference type="BioCyc" id="EcoCyc:G7000-MONOMER"/>
<dbReference type="PRO" id="PR:P64508"/>
<dbReference type="Proteomes" id="UP000000625">
    <property type="component" value="Chromosome"/>
</dbReference>
<dbReference type="GO" id="GO:0036460">
    <property type="term" value="P:cellular response to cell envelope stress"/>
    <property type="evidence" value="ECO:0000315"/>
    <property type="project" value="EcoCyc"/>
</dbReference>
<dbReference type="GO" id="GO:0034605">
    <property type="term" value="P:cellular response to heat"/>
    <property type="evidence" value="ECO:0000270"/>
    <property type="project" value="EcoCyc"/>
</dbReference>
<dbReference type="GO" id="GO:0097533">
    <property type="term" value="P:cellular stress response to acid chemical"/>
    <property type="evidence" value="ECO:0000315"/>
    <property type="project" value="EcoCyc"/>
</dbReference>
<dbReference type="InterPro" id="IPR019672">
    <property type="entry name" value="DUF2527"/>
</dbReference>
<dbReference type="Pfam" id="PF10736">
    <property type="entry name" value="DUF2527"/>
    <property type="match status" value="1"/>
</dbReference>
<protein>
    <recommendedName>
        <fullName>Protein YobF</fullName>
    </recommendedName>
</protein>
<sequence length="47" mass="5212">MCGIFSKEVLSKHVDVEYRFSAEPYIGASCSNVSVLSMLCLRAKKTI</sequence>
<comment type="induction">
    <text evidence="1 2">Expressed during stationary phase, induced at 45 degrees Celsius (at protein level), at a post-transcriptional level.</text>
</comment>
<comment type="similarity">
    <text evidence="3">Belongs to the YobF/DUF2527 family.</text>
</comment>
<accession>P64508</accession>
<accession>P76265</accession>
<accession>Q2MB19</accession>
<gene>
    <name type="primary">yobF</name>
    <name type="ordered locus">b1824</name>
    <name type="ordered locus">JW1813</name>
</gene>
<reference key="1">
    <citation type="journal article" date="1997" name="Science">
        <title>The complete genome sequence of Escherichia coli K-12.</title>
        <authorList>
            <person name="Blattner F.R."/>
            <person name="Plunkett G. III"/>
            <person name="Bloch C.A."/>
            <person name="Perna N.T."/>
            <person name="Burland V."/>
            <person name="Riley M."/>
            <person name="Collado-Vides J."/>
            <person name="Glasner J.D."/>
            <person name="Rode C.K."/>
            <person name="Mayhew G.F."/>
            <person name="Gregor J."/>
            <person name="Davis N.W."/>
            <person name="Kirkpatrick H.A."/>
            <person name="Goeden M.A."/>
            <person name="Rose D.J."/>
            <person name="Mau B."/>
            <person name="Shao Y."/>
        </authorList>
    </citation>
    <scope>NUCLEOTIDE SEQUENCE [LARGE SCALE GENOMIC DNA]</scope>
    <source>
        <strain>K12 / MG1655 / ATCC 47076</strain>
    </source>
</reference>
<reference key="2">
    <citation type="journal article" date="2006" name="Mol. Syst. Biol.">
        <title>Highly accurate genome sequences of Escherichia coli K-12 strains MG1655 and W3110.</title>
        <authorList>
            <person name="Hayashi K."/>
            <person name="Morooka N."/>
            <person name="Yamamoto Y."/>
            <person name="Fujita K."/>
            <person name="Isono K."/>
            <person name="Choi S."/>
            <person name="Ohtsubo E."/>
            <person name="Baba T."/>
            <person name="Wanner B.L."/>
            <person name="Mori H."/>
            <person name="Horiuchi T."/>
        </authorList>
    </citation>
    <scope>NUCLEOTIDE SEQUENCE [LARGE SCALE GENOMIC DNA]</scope>
    <source>
        <strain>K12 / W3110 / ATCC 27325 / DSM 5911</strain>
    </source>
</reference>
<reference key="3">
    <citation type="journal article" date="2008" name="Mol. Microbiol.">
        <title>Small membrane proteins found by comparative genomics and ribosome binding site models.</title>
        <authorList>
            <person name="Hemm M.R."/>
            <person name="Paul B.J."/>
            <person name="Schneider T.D."/>
            <person name="Storz G."/>
            <person name="Rudd K.E."/>
        </authorList>
    </citation>
    <scope>INDUCTION</scope>
    <source>
        <strain>K12 / MG1655 / ATCC 47076</strain>
    </source>
</reference>
<reference key="4">
    <citation type="journal article" date="2010" name="J. Bacteriol.">
        <title>Small stress response proteins in Escherichia coli: proteins missed by classical proteomic studies.</title>
        <authorList>
            <person name="Hemm M.R."/>
            <person name="Paul B.J."/>
            <person name="Miranda-Rios J."/>
            <person name="Zhang A."/>
            <person name="Soltanzad N."/>
            <person name="Storz G."/>
        </authorList>
    </citation>
    <scope>INDUCTION</scope>
    <source>
        <strain>K12 / MG1655 / ATCC 47076</strain>
    </source>
</reference>
<feature type="chain" id="PRO_0000169062" description="Protein YobF">
    <location>
        <begin position="1"/>
        <end position="47"/>
    </location>
</feature>
<proteinExistence type="evidence at protein level"/>
<keyword id="KW-1185">Reference proteome</keyword>
<keyword id="KW-0346">Stress response</keyword>
<name>YOBF_ECOLI</name>
<organism>
    <name type="scientific">Escherichia coli (strain K12)</name>
    <dbReference type="NCBI Taxonomy" id="83333"/>
    <lineage>
        <taxon>Bacteria</taxon>
        <taxon>Pseudomonadati</taxon>
        <taxon>Pseudomonadota</taxon>
        <taxon>Gammaproteobacteria</taxon>
        <taxon>Enterobacterales</taxon>
        <taxon>Enterobacteriaceae</taxon>
        <taxon>Escherichia</taxon>
    </lineage>
</organism>
<evidence type="ECO:0000269" key="1">
    <source>
    </source>
</evidence>
<evidence type="ECO:0000269" key="2">
    <source>
    </source>
</evidence>
<evidence type="ECO:0000305" key="3"/>